<organism>
    <name type="scientific">Oryza sativa subsp. japonica</name>
    <name type="common">Rice</name>
    <dbReference type="NCBI Taxonomy" id="39947"/>
    <lineage>
        <taxon>Eukaryota</taxon>
        <taxon>Viridiplantae</taxon>
        <taxon>Streptophyta</taxon>
        <taxon>Embryophyta</taxon>
        <taxon>Tracheophyta</taxon>
        <taxon>Spermatophyta</taxon>
        <taxon>Magnoliopsida</taxon>
        <taxon>Liliopsida</taxon>
        <taxon>Poales</taxon>
        <taxon>Poaceae</taxon>
        <taxon>BOP clade</taxon>
        <taxon>Oryzoideae</taxon>
        <taxon>Oryzeae</taxon>
        <taxon>Oryzinae</taxon>
        <taxon>Oryza</taxon>
        <taxon>Oryza sativa</taxon>
    </lineage>
</organism>
<accession>Q6ETN3</accession>
<proteinExistence type="evidence at protein level"/>
<feature type="chain" id="PRO_0000351624" description="4-coumarate--CoA ligase 3">
    <location>
        <begin position="1"/>
        <end position="554"/>
    </location>
</feature>
<feature type="region of interest" description="SBD1" evidence="2">
    <location>
        <begin position="261"/>
        <end position="330"/>
    </location>
</feature>
<feature type="region of interest" description="SBD2" evidence="2">
    <location>
        <begin position="331"/>
        <end position="398"/>
    </location>
</feature>
<feature type="binding site" evidence="1">
    <location>
        <position position="188"/>
    </location>
    <ligand>
        <name>ATP</name>
        <dbReference type="ChEBI" id="CHEBI:30616"/>
    </ligand>
</feature>
<feature type="binding site" evidence="1">
    <location>
        <position position="189"/>
    </location>
    <ligand>
        <name>ATP</name>
        <dbReference type="ChEBI" id="CHEBI:30616"/>
    </ligand>
</feature>
<feature type="binding site" evidence="1">
    <location>
        <position position="190"/>
    </location>
    <ligand>
        <name>ATP</name>
        <dbReference type="ChEBI" id="CHEBI:30616"/>
    </ligand>
</feature>
<feature type="binding site" evidence="1">
    <location>
        <position position="191"/>
    </location>
    <ligand>
        <name>ATP</name>
        <dbReference type="ChEBI" id="CHEBI:30616"/>
    </ligand>
</feature>
<feature type="binding site" evidence="1">
    <location>
        <position position="192"/>
    </location>
    <ligand>
        <name>ATP</name>
        <dbReference type="ChEBI" id="CHEBI:30616"/>
    </ligand>
</feature>
<feature type="binding site" evidence="1">
    <location>
        <position position="196"/>
    </location>
    <ligand>
        <name>ATP</name>
        <dbReference type="ChEBI" id="CHEBI:30616"/>
    </ligand>
</feature>
<feature type="binding site" evidence="1">
    <location>
        <position position="238"/>
    </location>
    <ligand>
        <name>(E)-4-coumaroyl-AMP</name>
        <dbReference type="ChEBI" id="CHEBI:192348"/>
    </ligand>
</feature>
<feature type="binding site" evidence="1">
    <location>
        <position position="242"/>
    </location>
    <ligand>
        <name>(E)-4-coumaroyl-AMP</name>
        <dbReference type="ChEBI" id="CHEBI:192348"/>
    </ligand>
</feature>
<feature type="binding site" evidence="1">
    <location>
        <position position="259"/>
    </location>
    <ligand>
        <name>CoA</name>
        <dbReference type="ChEBI" id="CHEBI:57287"/>
    </ligand>
</feature>
<feature type="binding site" evidence="1">
    <location>
        <position position="308"/>
    </location>
    <ligand>
        <name>(E)-4-coumaroyl-AMP</name>
        <dbReference type="ChEBI" id="CHEBI:192348"/>
    </ligand>
</feature>
<feature type="binding site" evidence="1">
    <location>
        <position position="330"/>
    </location>
    <ligand>
        <name>(E)-4-coumaroyl-AMP</name>
        <dbReference type="ChEBI" id="CHEBI:192348"/>
    </ligand>
</feature>
<feature type="binding site" evidence="1">
    <location>
        <position position="330"/>
    </location>
    <ligand>
        <name>ATP</name>
        <dbReference type="ChEBI" id="CHEBI:30616"/>
    </ligand>
</feature>
<feature type="binding site" evidence="1">
    <location>
        <position position="331"/>
    </location>
    <ligand>
        <name>(E)-4-coumaroyl-AMP</name>
        <dbReference type="ChEBI" id="CHEBI:192348"/>
    </ligand>
</feature>
<feature type="binding site" evidence="1">
    <location>
        <position position="331"/>
    </location>
    <ligand>
        <name>ATP</name>
        <dbReference type="ChEBI" id="CHEBI:30616"/>
    </ligand>
</feature>
<feature type="binding site" evidence="1">
    <location>
        <position position="335"/>
    </location>
    <ligand>
        <name>(E)-4-coumaroyl-AMP</name>
        <dbReference type="ChEBI" id="CHEBI:192348"/>
    </ligand>
</feature>
<feature type="binding site" evidence="1">
    <location>
        <position position="335"/>
    </location>
    <ligand>
        <name>ATP</name>
        <dbReference type="ChEBI" id="CHEBI:30616"/>
    </ligand>
</feature>
<feature type="binding site" evidence="1">
    <location>
        <position position="343"/>
    </location>
    <ligand>
        <name>(E)-4-coumaroyl-AMP</name>
        <dbReference type="ChEBI" id="CHEBI:192348"/>
    </ligand>
</feature>
<feature type="binding site" evidence="1">
    <location>
        <position position="419"/>
    </location>
    <ligand>
        <name>ATP</name>
        <dbReference type="ChEBI" id="CHEBI:30616"/>
    </ligand>
</feature>
<feature type="binding site" evidence="1">
    <location>
        <position position="434"/>
    </location>
    <ligand>
        <name>ATP</name>
        <dbReference type="ChEBI" id="CHEBI:30616"/>
    </ligand>
</feature>
<feature type="binding site" evidence="1">
    <location>
        <position position="436"/>
    </location>
    <ligand>
        <name>(E)-4-coumaroyl-AMP</name>
        <dbReference type="ChEBI" id="CHEBI:192348"/>
    </ligand>
</feature>
<feature type="binding site" evidence="1">
    <location>
        <position position="440"/>
    </location>
    <ligand>
        <name>(E)-4-coumaroyl-AMP</name>
        <dbReference type="ChEBI" id="CHEBI:192348"/>
    </ligand>
</feature>
<feature type="binding site" evidence="1">
    <location>
        <position position="442"/>
    </location>
    <ligand>
        <name>CoA</name>
        <dbReference type="ChEBI" id="CHEBI:57287"/>
    </ligand>
</feature>
<feature type="binding site" evidence="1">
    <location>
        <position position="443"/>
    </location>
    <ligand>
        <name>CoA</name>
        <dbReference type="ChEBI" id="CHEBI:57287"/>
    </ligand>
</feature>
<feature type="binding site" evidence="1">
    <location>
        <position position="525"/>
    </location>
    <ligand>
        <name>ATP</name>
        <dbReference type="ChEBI" id="CHEBI:30616"/>
    </ligand>
</feature>
<keyword id="KW-0067">ATP-binding</keyword>
<keyword id="KW-0436">Ligase</keyword>
<keyword id="KW-0460">Magnesium</keyword>
<keyword id="KW-0547">Nucleotide-binding</keyword>
<keyword id="KW-0587">Phenylpropanoid metabolism</keyword>
<keyword id="KW-1185">Reference proteome</keyword>
<dbReference type="EC" id="6.2.1.12" evidence="3 4"/>
<dbReference type="EC" id="6.2.1.34" evidence="3 4"/>
<dbReference type="EMBL" id="AB234050">
    <property type="protein sequence ID" value="BAF30962.1"/>
    <property type="molecule type" value="mRNA"/>
</dbReference>
<dbReference type="EMBL" id="AP004838">
    <property type="protein sequence ID" value="BAD27987.1"/>
    <property type="molecule type" value="Genomic_DNA"/>
</dbReference>
<dbReference type="EMBL" id="AP008208">
    <property type="protein sequence ID" value="BAF07983.1"/>
    <property type="molecule type" value="Genomic_DNA"/>
</dbReference>
<dbReference type="EMBL" id="AP014958">
    <property type="status" value="NOT_ANNOTATED_CDS"/>
    <property type="molecule type" value="Genomic_DNA"/>
</dbReference>
<dbReference type="EMBL" id="CM000139">
    <property type="protein sequence ID" value="EAZ21948.1"/>
    <property type="molecule type" value="Genomic_DNA"/>
</dbReference>
<dbReference type="RefSeq" id="XP_015625716.1">
    <property type="nucleotide sequence ID" value="XM_015770230.1"/>
</dbReference>
<dbReference type="SMR" id="Q6ETN3"/>
<dbReference type="FunCoup" id="Q6ETN3">
    <property type="interactions" value="1622"/>
</dbReference>
<dbReference type="STRING" id="39947.Q6ETN3"/>
<dbReference type="PaxDb" id="39947-Q6ETN3"/>
<dbReference type="EnsemblPlants" id="Os02t0177600-01">
    <property type="protein sequence ID" value="Os02t0177600-01"/>
    <property type="gene ID" value="Os02g0177600"/>
</dbReference>
<dbReference type="Gramene" id="Os02t0177600-01">
    <property type="protein sequence ID" value="Os02t0177600-01"/>
    <property type="gene ID" value="Os02g0177600"/>
</dbReference>
<dbReference type="KEGG" id="dosa:Os02g0177600"/>
<dbReference type="eggNOG" id="KOG1176">
    <property type="taxonomic scope" value="Eukaryota"/>
</dbReference>
<dbReference type="HOGENOM" id="CLU_000022_59_2_1"/>
<dbReference type="InParanoid" id="Q6ETN3"/>
<dbReference type="OrthoDB" id="10253869at2759"/>
<dbReference type="BRENDA" id="6.2.1.12">
    <property type="organism ID" value="4460"/>
</dbReference>
<dbReference type="PlantReactome" id="R-OSA-1119316">
    <property type="pathway name" value="Phenylpropanoid biosynthesis"/>
</dbReference>
<dbReference type="PlantReactome" id="R-OSA-1119531">
    <property type="pathway name" value="Flavonoid biosynthesis"/>
</dbReference>
<dbReference type="UniPathway" id="UPA00372">
    <property type="reaction ID" value="UER00547"/>
</dbReference>
<dbReference type="Proteomes" id="UP000000763">
    <property type="component" value="Chromosome 2"/>
</dbReference>
<dbReference type="Proteomes" id="UP000007752">
    <property type="component" value="Chromosome 2"/>
</dbReference>
<dbReference type="Proteomes" id="UP000059680">
    <property type="component" value="Chromosome 2"/>
</dbReference>
<dbReference type="GO" id="GO:0106286">
    <property type="term" value="F:(E)-caffeate-CoA ligase activity"/>
    <property type="evidence" value="ECO:0007669"/>
    <property type="project" value="RHEA"/>
</dbReference>
<dbReference type="GO" id="GO:0016207">
    <property type="term" value="F:4-coumarate-CoA ligase activity"/>
    <property type="evidence" value="ECO:0000314"/>
    <property type="project" value="UniProtKB"/>
</dbReference>
<dbReference type="GO" id="GO:0005524">
    <property type="term" value="F:ATP binding"/>
    <property type="evidence" value="ECO:0007669"/>
    <property type="project" value="UniProtKB-KW"/>
</dbReference>
<dbReference type="GO" id="GO:0016405">
    <property type="term" value="F:CoA-ligase activity"/>
    <property type="evidence" value="ECO:0000318"/>
    <property type="project" value="GO_Central"/>
</dbReference>
<dbReference type="GO" id="GO:0106290">
    <property type="term" value="F:trans-cinnamate-CoA ligase activity"/>
    <property type="evidence" value="ECO:0000314"/>
    <property type="project" value="UniProtKB"/>
</dbReference>
<dbReference type="GO" id="GO:0050563">
    <property type="term" value="F:trans-feruloyl-CoA synthase activity"/>
    <property type="evidence" value="ECO:0007669"/>
    <property type="project" value="RHEA"/>
</dbReference>
<dbReference type="GO" id="GO:0009698">
    <property type="term" value="P:phenylpropanoid metabolic process"/>
    <property type="evidence" value="ECO:0000314"/>
    <property type="project" value="UniProtKB"/>
</dbReference>
<dbReference type="CDD" id="cd05904">
    <property type="entry name" value="4CL"/>
    <property type="match status" value="1"/>
</dbReference>
<dbReference type="FunFam" id="3.30.300.30:FF:000007">
    <property type="entry name" value="4-coumarate--CoA ligase 2"/>
    <property type="match status" value="1"/>
</dbReference>
<dbReference type="FunFam" id="3.40.50.12780:FF:000003">
    <property type="entry name" value="Long-chain-fatty-acid--CoA ligase FadD"/>
    <property type="match status" value="1"/>
</dbReference>
<dbReference type="Gene3D" id="3.30.300.30">
    <property type="match status" value="1"/>
</dbReference>
<dbReference type="Gene3D" id="3.40.50.12780">
    <property type="entry name" value="N-terminal domain of ligase-like"/>
    <property type="match status" value="1"/>
</dbReference>
<dbReference type="InterPro" id="IPR025110">
    <property type="entry name" value="AMP-bd_C"/>
</dbReference>
<dbReference type="InterPro" id="IPR045851">
    <property type="entry name" value="AMP-bd_C_sf"/>
</dbReference>
<dbReference type="InterPro" id="IPR020845">
    <property type="entry name" value="AMP-binding_CS"/>
</dbReference>
<dbReference type="InterPro" id="IPR000873">
    <property type="entry name" value="AMP-dep_synth/lig_dom"/>
</dbReference>
<dbReference type="InterPro" id="IPR042099">
    <property type="entry name" value="ANL_N_sf"/>
</dbReference>
<dbReference type="PANTHER" id="PTHR24096:SF300">
    <property type="entry name" value="4-COUMARATE--COA LIGASE 3"/>
    <property type="match status" value="1"/>
</dbReference>
<dbReference type="PANTHER" id="PTHR24096">
    <property type="entry name" value="LONG-CHAIN-FATTY-ACID--COA LIGASE"/>
    <property type="match status" value="1"/>
</dbReference>
<dbReference type="Pfam" id="PF00501">
    <property type="entry name" value="AMP-binding"/>
    <property type="match status" value="1"/>
</dbReference>
<dbReference type="Pfam" id="PF13193">
    <property type="entry name" value="AMP-binding_C"/>
    <property type="match status" value="1"/>
</dbReference>
<dbReference type="SUPFAM" id="SSF56801">
    <property type="entry name" value="Acetyl-CoA synthetase-like"/>
    <property type="match status" value="1"/>
</dbReference>
<dbReference type="PROSITE" id="PS00455">
    <property type="entry name" value="AMP_BINDING"/>
    <property type="match status" value="1"/>
</dbReference>
<sequence>MGSVAAEEVVVFRSKLPDIEIDNSMTLQEYCFARMAEVGARPCLIDGQTGESYTYAEVESASRRAAAGLRRMGVGKGDVVMSLLRNCPEFAFSFLGAARLGAATTTANPFYTPHEVHRQAEAAGARVIVTEACAVEKVREFAAERGVPVVTVDGAFDGCVEFREVLAAEELDADADVHPDDVVALPYSSGTTGLPKGVMLTHRSLITSVAQQVDGENPNLYFSKDDVILCLLPLFHIYSLNSVLLAGLRAGSTIVIMRKFDLGALVDLVRKHNITIAPFVPPIVVEIAKSPRVTAEDLASIRMVMSGAAPMGKDLQDAFMAKIPNAVLGQGYGMTEAGPVLAMCLAFAKEPFKVKSGSCGTVVRNAELKIVDPDTGTSLGRNQSGEICIRGEQIMKGYLNDPEATKNTIDEDGWLHTGDIGFVDDDDEIFIVDRLKEIIKYKGFQVPPAELEALLITHPEIKDAAVVSMKDDLAGEVPVAFIVRTEGSEITEDEIKKFVAKEVVFYKRINKVFFTDSIPKNPSGKILRKDLRARLAAGIPDAVAAAAADAPKSS</sequence>
<protein>
    <recommendedName>
        <fullName evidence="5">4-coumarate--CoA ligase 3</fullName>
        <shortName evidence="5">4CL 3</shortName>
        <shortName evidence="5">Os4CL3</shortName>
        <ecNumber evidence="3 4">6.2.1.12</ecNumber>
    </recommendedName>
    <alternativeName>
        <fullName evidence="6">(E)-ferulate--CoA ligase</fullName>
        <ecNumber evidence="3 4">6.2.1.34</ecNumber>
    </alternativeName>
    <alternativeName>
        <fullName evidence="6">4-coumaroyl-CoA synthase 3</fullName>
    </alternativeName>
</protein>
<comment type="function">
    <text evidence="1 3 4">Involved in the phenylpropanoid metabolism by mediating the activation of a number of hydroxycinnamates for the biosynthesis of monolignols and other phenolic secondary metabolites (PubMed:21807887, PubMed:23246835). Catalyzes the formation of CoA esters of cinnamate, 4-coumarate, caffeate and ferulate (PubMed:21807887, PubMed:23246835). Is more efficient with substrates in the following order: ferulate &gt; 4-coumarate &gt; caffeate &gt; cinnamate (PubMed:21807887). Possesses very high activity compared to 4CL1, 4CL2, 4CL4 and 4CL5 (PubMed:21807887). Cannot convert sinapate to its corresponding CoA ester (PubMed:21807887, PubMed:23246835). May play a role in the synthesis of lignin as well as other phenolic compounds (PubMed:21807887). Follows a two-step reaction mechanism, wherein the carboxylate substrate first undergoes adenylation by ATP, followed by a thioesterification in the presence of CoA to yield the final CoA thioester (By similarity).</text>
</comment>
<comment type="catalytic activity">
    <reaction evidence="3 4">
        <text>(E)-ferulate + ATP + CoA = (E)-feruloyl-CoA + AMP + diphosphate</text>
        <dbReference type="Rhea" id="RHEA:36251"/>
        <dbReference type="ChEBI" id="CHEBI:29749"/>
        <dbReference type="ChEBI" id="CHEBI:30616"/>
        <dbReference type="ChEBI" id="CHEBI:33019"/>
        <dbReference type="ChEBI" id="CHEBI:57287"/>
        <dbReference type="ChEBI" id="CHEBI:87305"/>
        <dbReference type="ChEBI" id="CHEBI:456215"/>
        <dbReference type="EC" id="6.2.1.34"/>
    </reaction>
    <physiologicalReaction direction="left-to-right" evidence="3 4">
        <dbReference type="Rhea" id="RHEA:36252"/>
    </physiologicalReaction>
</comment>
<comment type="catalytic activity">
    <reaction evidence="3 4">
        <text>(E)-4-coumarate + ATP + CoA = (E)-4-coumaroyl-CoA + AMP + diphosphate</text>
        <dbReference type="Rhea" id="RHEA:19641"/>
        <dbReference type="ChEBI" id="CHEBI:12876"/>
        <dbReference type="ChEBI" id="CHEBI:30616"/>
        <dbReference type="ChEBI" id="CHEBI:33019"/>
        <dbReference type="ChEBI" id="CHEBI:57287"/>
        <dbReference type="ChEBI" id="CHEBI:85008"/>
        <dbReference type="ChEBI" id="CHEBI:456215"/>
        <dbReference type="EC" id="6.2.1.12"/>
    </reaction>
    <physiologicalReaction direction="left-to-right" evidence="3 4">
        <dbReference type="Rhea" id="RHEA:19642"/>
    </physiologicalReaction>
</comment>
<comment type="catalytic activity">
    <reaction evidence="3 4">
        <text>(E)-caffeate + ATP + CoA = (E)-caffeoyl-CoA + AMP + diphosphate</text>
        <dbReference type="Rhea" id="RHEA:36299"/>
        <dbReference type="ChEBI" id="CHEBI:30616"/>
        <dbReference type="ChEBI" id="CHEBI:33019"/>
        <dbReference type="ChEBI" id="CHEBI:57287"/>
        <dbReference type="ChEBI" id="CHEBI:57770"/>
        <dbReference type="ChEBI" id="CHEBI:87136"/>
        <dbReference type="ChEBI" id="CHEBI:456215"/>
    </reaction>
    <physiologicalReaction direction="left-to-right" evidence="3 4">
        <dbReference type="Rhea" id="RHEA:36300"/>
    </physiologicalReaction>
</comment>
<comment type="catalytic activity">
    <reaction evidence="3 4">
        <text>(E)-cinnamate + ATP + CoA = (E)-cinnamoyl-CoA + AMP + diphosphate</text>
        <dbReference type="Rhea" id="RHEA:64788"/>
        <dbReference type="ChEBI" id="CHEBI:15669"/>
        <dbReference type="ChEBI" id="CHEBI:30616"/>
        <dbReference type="ChEBI" id="CHEBI:33019"/>
        <dbReference type="ChEBI" id="CHEBI:57252"/>
        <dbReference type="ChEBI" id="CHEBI:57287"/>
        <dbReference type="ChEBI" id="CHEBI:456215"/>
    </reaction>
    <physiologicalReaction direction="left-to-right" evidence="3 4">
        <dbReference type="Rhea" id="RHEA:64789"/>
    </physiologicalReaction>
</comment>
<comment type="catalytic activity">
    <reaction evidence="7 8">
        <text>(E)-ferulate + ATP + H(+) = (E)-feruloyl-AMP + diphosphate</text>
        <dbReference type="Rhea" id="RHEA:72439"/>
        <dbReference type="ChEBI" id="CHEBI:15378"/>
        <dbReference type="ChEBI" id="CHEBI:29749"/>
        <dbReference type="ChEBI" id="CHEBI:30616"/>
        <dbReference type="ChEBI" id="CHEBI:33019"/>
        <dbReference type="ChEBI" id="CHEBI:192350"/>
    </reaction>
    <physiologicalReaction direction="left-to-right" evidence="7 8">
        <dbReference type="Rhea" id="RHEA:72440"/>
    </physiologicalReaction>
</comment>
<comment type="catalytic activity">
    <reaction evidence="7 8">
        <text>(E)-feruloyl-AMP + CoA = (E)-feruloyl-CoA + AMP + H(+)</text>
        <dbReference type="Rhea" id="RHEA:72443"/>
        <dbReference type="ChEBI" id="CHEBI:15378"/>
        <dbReference type="ChEBI" id="CHEBI:57287"/>
        <dbReference type="ChEBI" id="CHEBI:87305"/>
        <dbReference type="ChEBI" id="CHEBI:192350"/>
        <dbReference type="ChEBI" id="CHEBI:456215"/>
    </reaction>
    <physiologicalReaction direction="left-to-right" evidence="7 8">
        <dbReference type="Rhea" id="RHEA:72444"/>
    </physiologicalReaction>
</comment>
<comment type="catalytic activity">
    <reaction evidence="7 8">
        <text>(E)-4-coumarate + ATP + H(+) = (E)-4-coumaroyl-AMP + diphosphate</text>
        <dbReference type="Rhea" id="RHEA:72419"/>
        <dbReference type="ChEBI" id="CHEBI:12876"/>
        <dbReference type="ChEBI" id="CHEBI:15378"/>
        <dbReference type="ChEBI" id="CHEBI:30616"/>
        <dbReference type="ChEBI" id="CHEBI:33019"/>
        <dbReference type="ChEBI" id="CHEBI:192348"/>
    </reaction>
    <physiologicalReaction direction="left-to-right" evidence="7 8">
        <dbReference type="Rhea" id="RHEA:72420"/>
    </physiologicalReaction>
</comment>
<comment type="catalytic activity">
    <reaction evidence="7 8">
        <text>(E)-4-coumaroyl-AMP + CoA = (E)-4-coumaroyl-CoA + AMP + H(+)</text>
        <dbReference type="Rhea" id="RHEA:72423"/>
        <dbReference type="ChEBI" id="CHEBI:15378"/>
        <dbReference type="ChEBI" id="CHEBI:57287"/>
        <dbReference type="ChEBI" id="CHEBI:85008"/>
        <dbReference type="ChEBI" id="CHEBI:192348"/>
        <dbReference type="ChEBI" id="CHEBI:456215"/>
    </reaction>
    <physiologicalReaction direction="left-to-right" evidence="7 8">
        <dbReference type="Rhea" id="RHEA:72424"/>
    </physiologicalReaction>
</comment>
<comment type="catalytic activity">
    <reaction evidence="7 8">
        <text>(E)-caffeate + ATP + H(+) = (E)-caffeoyl-AMP + diphosphate</text>
        <dbReference type="Rhea" id="RHEA:72431"/>
        <dbReference type="ChEBI" id="CHEBI:15378"/>
        <dbReference type="ChEBI" id="CHEBI:30616"/>
        <dbReference type="ChEBI" id="CHEBI:33019"/>
        <dbReference type="ChEBI" id="CHEBI:57770"/>
        <dbReference type="ChEBI" id="CHEBI:192349"/>
    </reaction>
    <physiologicalReaction direction="left-to-right" evidence="7 8">
        <dbReference type="Rhea" id="RHEA:72432"/>
    </physiologicalReaction>
</comment>
<comment type="catalytic activity">
    <reaction evidence="7 8">
        <text>(E)-caffeoyl-AMP + CoA = (E)-caffeoyl-CoA + AMP + H(+)</text>
        <dbReference type="Rhea" id="RHEA:72435"/>
        <dbReference type="ChEBI" id="CHEBI:15378"/>
        <dbReference type="ChEBI" id="CHEBI:57287"/>
        <dbReference type="ChEBI" id="CHEBI:87136"/>
        <dbReference type="ChEBI" id="CHEBI:192349"/>
        <dbReference type="ChEBI" id="CHEBI:456215"/>
    </reaction>
    <physiologicalReaction direction="left-to-right" evidence="7 8">
        <dbReference type="Rhea" id="RHEA:72436"/>
    </physiologicalReaction>
</comment>
<comment type="cofactor">
    <cofactor evidence="1">
        <name>Mg(2+)</name>
        <dbReference type="ChEBI" id="CHEBI:18420"/>
    </cofactor>
</comment>
<comment type="biophysicochemical properties">
    <kinetics>
        <KM evidence="3">28.2 uM for cinnamate</KM>
        <KM evidence="3">4.9 uM for 4-coumarate</KM>
        <KM evidence="3">10.9 uM for caffeate</KM>
        <KM evidence="3">3.5 uM for ferulate</KM>
        <Vmax evidence="3">3.01 nmol/sec/mg enzyme with cinnamate as substrate</Vmax>
        <Vmax evidence="3">4.7 nmol/sec/mg enzyme with 4-coumarate as substrate</Vmax>
        <Vmax evidence="3">4.21 nmol/sec/mg enzyme with caffeate as substrate</Vmax>
        <Vmax evidence="3">4.93 nmol/sec/mg enzyme with ferulate as substrate</Vmax>
        <text evidence="3">kcat is 10.92 min(-1) with cinnamate as substrate (PubMed:21807887). kcat is 17.1 min(-1) with 4-coumarate as substrate (PubMed:21807887). kcat is 15.3 min(-1) with caffeate as substrate (PubMed:21807887). kcat is 17.94 min(-1) with ferulate as substrate (PubMed:21807887).</text>
    </kinetics>
</comment>
<comment type="pathway">
    <text evidence="6">Phytoalexin biosynthesis; 3,4',5-trihydroxystilbene biosynthesis; 3,4',5-trihydroxystilbene from trans-4-coumarate: step 1/2.</text>
</comment>
<comment type="tissue specificity">
    <text evidence="3">Expressed in root exodermis and epidermis cells, stem vascular cells, leaf developing vascular bundle cells and parenchyma cells, lemma, palea, stamens and pistil.</text>
</comment>
<comment type="induction">
    <text evidence="4">Induced by wounding (PubMed:23246835). Down-regulated by UV irradiation (PubMed:23246835).</text>
</comment>
<comment type="domain">
    <text evidence="2">Both substrate-binding domains (SBD1 and SBD2) are involved in the substrate recognition, and are sufficient to confer the substrate specificity.</text>
</comment>
<comment type="miscellaneous">
    <text evidence="3">Plants silencing 4CL3 exhibit significant lignin reduction, reduced plant height, decreased panicle fertility and abnormal anther development.</text>
</comment>
<comment type="similarity">
    <text evidence="6">Belongs to the ATP-dependent AMP-binding enzyme family.</text>
</comment>
<gene>
    <name evidence="5" type="primary">4CL3</name>
    <name evidence="10" type="ordered locus">Os02g0177600</name>
    <name evidence="6" type="ordered locus">LOC_Os02g08100</name>
    <name evidence="11" type="ORF">OsJ_005431</name>
    <name evidence="9" type="ORF">P0504A05.24</name>
</gene>
<evidence type="ECO:0000250" key="1">
    <source>
        <dbReference type="UniProtKB" id="O24146"/>
    </source>
</evidence>
<evidence type="ECO:0000250" key="2">
    <source>
        <dbReference type="UniProtKB" id="Q42524"/>
    </source>
</evidence>
<evidence type="ECO:0000269" key="3">
    <source>
    </source>
</evidence>
<evidence type="ECO:0000269" key="4">
    <source>
    </source>
</evidence>
<evidence type="ECO:0000303" key="5">
    <source>
    </source>
</evidence>
<evidence type="ECO:0000305" key="6"/>
<evidence type="ECO:0000305" key="7">
    <source>
    </source>
</evidence>
<evidence type="ECO:0000305" key="8">
    <source>
    </source>
</evidence>
<evidence type="ECO:0000312" key="9">
    <source>
        <dbReference type="EMBL" id="BAD27987.1"/>
    </source>
</evidence>
<evidence type="ECO:0000312" key="10">
    <source>
        <dbReference type="EMBL" id="BAF07983.1"/>
    </source>
</evidence>
<evidence type="ECO:0000312" key="11">
    <source>
        <dbReference type="EMBL" id="EAZ21948.1"/>
    </source>
</evidence>
<reference key="1">
    <citation type="submission" date="2005-09" db="EMBL/GenBank/DDBJ databases">
        <title>4-coumarate:CoA ligase in Rice.</title>
        <authorList>
            <person name="Nakano Y."/>
            <person name="Satoh K."/>
            <person name="Mase K."/>
            <person name="Nishikubo N."/>
            <person name="Kitano H."/>
            <person name="Katayama Y."/>
        </authorList>
    </citation>
    <scope>NUCLEOTIDE SEQUENCE [MRNA]</scope>
    <source>
        <strain>cv. Fujiminori</strain>
    </source>
</reference>
<reference key="2">
    <citation type="journal article" date="2005" name="Nature">
        <title>The map-based sequence of the rice genome.</title>
        <authorList>
            <consortium name="International rice genome sequencing project (IRGSP)"/>
        </authorList>
    </citation>
    <scope>NUCLEOTIDE SEQUENCE [LARGE SCALE GENOMIC DNA]</scope>
    <source>
        <strain>cv. Nipponbare</strain>
    </source>
</reference>
<reference key="3">
    <citation type="journal article" date="2008" name="Nucleic Acids Res.">
        <title>The rice annotation project database (RAP-DB): 2008 update.</title>
        <authorList>
            <consortium name="The rice annotation project (RAP)"/>
        </authorList>
    </citation>
    <scope>GENOME REANNOTATION</scope>
    <source>
        <strain>cv. Nipponbare</strain>
    </source>
</reference>
<reference key="4">
    <citation type="journal article" date="2013" name="Rice">
        <title>Improvement of the Oryza sativa Nipponbare reference genome using next generation sequence and optical map data.</title>
        <authorList>
            <person name="Kawahara Y."/>
            <person name="de la Bastide M."/>
            <person name="Hamilton J.P."/>
            <person name="Kanamori H."/>
            <person name="McCombie W.R."/>
            <person name="Ouyang S."/>
            <person name="Schwartz D.C."/>
            <person name="Tanaka T."/>
            <person name="Wu J."/>
            <person name="Zhou S."/>
            <person name="Childs K.L."/>
            <person name="Davidson R.M."/>
            <person name="Lin H."/>
            <person name="Quesada-Ocampo L."/>
            <person name="Vaillancourt B."/>
            <person name="Sakai H."/>
            <person name="Lee S.S."/>
            <person name="Kim J."/>
            <person name="Numa H."/>
            <person name="Itoh T."/>
            <person name="Buell C.R."/>
            <person name="Matsumoto T."/>
        </authorList>
    </citation>
    <scope>GENOME REANNOTATION</scope>
    <source>
        <strain>cv. Nipponbare</strain>
    </source>
</reference>
<reference key="5">
    <citation type="journal article" date="2005" name="PLoS Biol.">
        <title>The genomes of Oryza sativa: a history of duplications.</title>
        <authorList>
            <person name="Yu J."/>
            <person name="Wang J."/>
            <person name="Lin W."/>
            <person name="Li S."/>
            <person name="Li H."/>
            <person name="Zhou J."/>
            <person name="Ni P."/>
            <person name="Dong W."/>
            <person name="Hu S."/>
            <person name="Zeng C."/>
            <person name="Zhang J."/>
            <person name="Zhang Y."/>
            <person name="Li R."/>
            <person name="Xu Z."/>
            <person name="Li S."/>
            <person name="Li X."/>
            <person name="Zheng H."/>
            <person name="Cong L."/>
            <person name="Lin L."/>
            <person name="Yin J."/>
            <person name="Geng J."/>
            <person name="Li G."/>
            <person name="Shi J."/>
            <person name="Liu J."/>
            <person name="Lv H."/>
            <person name="Li J."/>
            <person name="Wang J."/>
            <person name="Deng Y."/>
            <person name="Ran L."/>
            <person name="Shi X."/>
            <person name="Wang X."/>
            <person name="Wu Q."/>
            <person name="Li C."/>
            <person name="Ren X."/>
            <person name="Wang J."/>
            <person name="Wang X."/>
            <person name="Li D."/>
            <person name="Liu D."/>
            <person name="Zhang X."/>
            <person name="Ji Z."/>
            <person name="Zhao W."/>
            <person name="Sun Y."/>
            <person name="Zhang Z."/>
            <person name="Bao J."/>
            <person name="Han Y."/>
            <person name="Dong L."/>
            <person name="Ji J."/>
            <person name="Chen P."/>
            <person name="Wu S."/>
            <person name="Liu J."/>
            <person name="Xiao Y."/>
            <person name="Bu D."/>
            <person name="Tan J."/>
            <person name="Yang L."/>
            <person name="Ye C."/>
            <person name="Zhang J."/>
            <person name="Xu J."/>
            <person name="Zhou Y."/>
            <person name="Yu Y."/>
            <person name="Zhang B."/>
            <person name="Zhuang S."/>
            <person name="Wei H."/>
            <person name="Liu B."/>
            <person name="Lei M."/>
            <person name="Yu H."/>
            <person name="Li Y."/>
            <person name="Xu H."/>
            <person name="Wei S."/>
            <person name="He X."/>
            <person name="Fang L."/>
            <person name="Zhang Z."/>
            <person name="Zhang Y."/>
            <person name="Huang X."/>
            <person name="Su Z."/>
            <person name="Tong W."/>
            <person name="Li J."/>
            <person name="Tong Z."/>
            <person name="Li S."/>
            <person name="Ye J."/>
            <person name="Wang L."/>
            <person name="Fang L."/>
            <person name="Lei T."/>
            <person name="Chen C.-S."/>
            <person name="Chen H.-C."/>
            <person name="Xu Z."/>
            <person name="Li H."/>
            <person name="Huang H."/>
            <person name="Zhang F."/>
            <person name="Xu H."/>
            <person name="Li N."/>
            <person name="Zhao C."/>
            <person name="Li S."/>
            <person name="Dong L."/>
            <person name="Huang Y."/>
            <person name="Li L."/>
            <person name="Xi Y."/>
            <person name="Qi Q."/>
            <person name="Li W."/>
            <person name="Zhang B."/>
            <person name="Hu W."/>
            <person name="Zhang Y."/>
            <person name="Tian X."/>
            <person name="Jiao Y."/>
            <person name="Liang X."/>
            <person name="Jin J."/>
            <person name="Gao L."/>
            <person name="Zheng W."/>
            <person name="Hao B."/>
            <person name="Liu S.-M."/>
            <person name="Wang W."/>
            <person name="Yuan L."/>
            <person name="Cao M."/>
            <person name="McDermott J."/>
            <person name="Samudrala R."/>
            <person name="Wang J."/>
            <person name="Wong G.K.-S."/>
            <person name="Yang H."/>
        </authorList>
    </citation>
    <scope>NUCLEOTIDE SEQUENCE [LARGE SCALE GENOMIC DNA]</scope>
    <source>
        <strain>cv. Nipponbare</strain>
    </source>
</reference>
<reference key="6">
    <citation type="journal article" date="2008" name="New Phytol.">
        <title>Genome-wide analysis of a land plant-specific acyl:coenzyme A synthetase (ACS) gene family in Arabidopsis, poplar, rice and Physcomitrella.</title>
        <authorList>
            <person name="de Azevedo Souza C."/>
            <person name="Barbazuk B."/>
            <person name="Ralph S.G."/>
            <person name="Bohlmann J."/>
            <person name="Hamberger B."/>
            <person name="Douglas C.J."/>
        </authorList>
    </citation>
    <scope>GENE FAMILY</scope>
</reference>
<reference key="7">
    <citation type="journal article" date="2011" name="Plant Physiol.">
        <title>Functional characterization of evolutionarily divergent 4-coumarate:coenzyme a ligases in rice.</title>
        <authorList>
            <person name="Gui J."/>
            <person name="Shen J."/>
            <person name="Li L."/>
        </authorList>
    </citation>
    <scope>FUNCTION</scope>
    <scope>CATALYTIC ACTIVITY</scope>
    <scope>BIOPHYSICOCHEMICAL PROPERTIES</scope>
    <scope>TISSUE SPECIFICITY</scope>
</reference>
<reference key="8">
    <citation type="journal article" date="2013" name="Biochem. Biophys. Res. Commun.">
        <title>Analysis of five rice 4-coumarate:coenzyme A ligase enzyme activity and stress response for potential roles in lignin and flavonoid biosynthesis in rice.</title>
        <authorList>
            <person name="Sun H."/>
            <person name="Li Y."/>
            <person name="Feng S."/>
            <person name="Zou W."/>
            <person name="Guo K."/>
            <person name="Fan C."/>
            <person name="Si S."/>
            <person name="Peng L."/>
        </authorList>
    </citation>
    <scope>FUNCTION</scope>
    <scope>CATALYTIC ACTIVITY</scope>
    <scope>INDUCTION</scope>
</reference>
<name>4CL3_ORYSJ</name>